<dbReference type="EMBL" id="CR626927">
    <property type="protein sequence ID" value="CAH09835.1"/>
    <property type="molecule type" value="Genomic_DNA"/>
</dbReference>
<dbReference type="RefSeq" id="WP_005791306.1">
    <property type="nucleotide sequence ID" value="NZ_UFTH01000001.1"/>
</dbReference>
<dbReference type="SMR" id="Q5L7W4"/>
<dbReference type="PaxDb" id="272559-BF9343_4054"/>
<dbReference type="GeneID" id="60370174"/>
<dbReference type="KEGG" id="bfs:BF9343_4054"/>
<dbReference type="eggNOG" id="COG0509">
    <property type="taxonomic scope" value="Bacteria"/>
</dbReference>
<dbReference type="HOGENOM" id="CLU_097408_2_2_10"/>
<dbReference type="Proteomes" id="UP000006731">
    <property type="component" value="Chromosome"/>
</dbReference>
<dbReference type="GO" id="GO:0005829">
    <property type="term" value="C:cytosol"/>
    <property type="evidence" value="ECO:0007669"/>
    <property type="project" value="TreeGrafter"/>
</dbReference>
<dbReference type="GO" id="GO:0005960">
    <property type="term" value="C:glycine cleavage complex"/>
    <property type="evidence" value="ECO:0007669"/>
    <property type="project" value="InterPro"/>
</dbReference>
<dbReference type="GO" id="GO:0019464">
    <property type="term" value="P:glycine decarboxylation via glycine cleavage system"/>
    <property type="evidence" value="ECO:0007669"/>
    <property type="project" value="UniProtKB-UniRule"/>
</dbReference>
<dbReference type="CDD" id="cd06848">
    <property type="entry name" value="GCS_H"/>
    <property type="match status" value="1"/>
</dbReference>
<dbReference type="Gene3D" id="2.40.50.100">
    <property type="match status" value="1"/>
</dbReference>
<dbReference type="HAMAP" id="MF_00272">
    <property type="entry name" value="GcvH"/>
    <property type="match status" value="1"/>
</dbReference>
<dbReference type="InterPro" id="IPR003016">
    <property type="entry name" value="2-oxoA_DH_lipoyl-BS"/>
</dbReference>
<dbReference type="InterPro" id="IPR000089">
    <property type="entry name" value="Biotin_lipoyl"/>
</dbReference>
<dbReference type="InterPro" id="IPR002930">
    <property type="entry name" value="GCV_H"/>
</dbReference>
<dbReference type="InterPro" id="IPR033753">
    <property type="entry name" value="GCV_H/Fam206"/>
</dbReference>
<dbReference type="InterPro" id="IPR017453">
    <property type="entry name" value="GCV_H_sub"/>
</dbReference>
<dbReference type="InterPro" id="IPR011053">
    <property type="entry name" value="Single_hybrid_motif"/>
</dbReference>
<dbReference type="NCBIfam" id="TIGR00527">
    <property type="entry name" value="gcvH"/>
    <property type="match status" value="1"/>
</dbReference>
<dbReference type="NCBIfam" id="NF002270">
    <property type="entry name" value="PRK01202.1"/>
    <property type="match status" value="1"/>
</dbReference>
<dbReference type="PANTHER" id="PTHR11715">
    <property type="entry name" value="GLYCINE CLEAVAGE SYSTEM H PROTEIN"/>
    <property type="match status" value="1"/>
</dbReference>
<dbReference type="PANTHER" id="PTHR11715:SF3">
    <property type="entry name" value="GLYCINE CLEAVAGE SYSTEM H PROTEIN-RELATED"/>
    <property type="match status" value="1"/>
</dbReference>
<dbReference type="Pfam" id="PF01597">
    <property type="entry name" value="GCV_H"/>
    <property type="match status" value="1"/>
</dbReference>
<dbReference type="SUPFAM" id="SSF51230">
    <property type="entry name" value="Single hybrid motif"/>
    <property type="match status" value="1"/>
</dbReference>
<dbReference type="PROSITE" id="PS50968">
    <property type="entry name" value="BIOTINYL_LIPOYL"/>
    <property type="match status" value="1"/>
</dbReference>
<dbReference type="PROSITE" id="PS00189">
    <property type="entry name" value="LIPOYL"/>
    <property type="match status" value="1"/>
</dbReference>
<name>GCSH_BACFN</name>
<keyword id="KW-0450">Lipoyl</keyword>
<organism>
    <name type="scientific">Bacteroides fragilis (strain ATCC 25285 / DSM 2151 / CCUG 4856 / JCM 11019 / LMG 10263 / NCTC 9343 / Onslow / VPI 2553 / EN-2)</name>
    <dbReference type="NCBI Taxonomy" id="272559"/>
    <lineage>
        <taxon>Bacteria</taxon>
        <taxon>Pseudomonadati</taxon>
        <taxon>Bacteroidota</taxon>
        <taxon>Bacteroidia</taxon>
        <taxon>Bacteroidales</taxon>
        <taxon>Bacteroidaceae</taxon>
        <taxon>Bacteroides</taxon>
    </lineage>
</organism>
<evidence type="ECO:0000255" key="1">
    <source>
        <dbReference type="HAMAP-Rule" id="MF_00272"/>
    </source>
</evidence>
<evidence type="ECO:0000255" key="2">
    <source>
        <dbReference type="PROSITE-ProRule" id="PRU01066"/>
    </source>
</evidence>
<accession>Q5L7W4</accession>
<gene>
    <name evidence="1" type="primary">gcvH</name>
    <name type="ordered locus">BF4162</name>
</gene>
<feature type="chain" id="PRO_0000302352" description="Glycine cleavage system H protein">
    <location>
        <begin position="1"/>
        <end position="126"/>
    </location>
</feature>
<feature type="domain" description="Lipoyl-binding" evidence="2">
    <location>
        <begin position="22"/>
        <end position="104"/>
    </location>
</feature>
<feature type="modified residue" description="N6-lipoyllysine" evidence="1">
    <location>
        <position position="63"/>
    </location>
</feature>
<protein>
    <recommendedName>
        <fullName evidence="1">Glycine cleavage system H protein</fullName>
    </recommendedName>
</protein>
<comment type="function">
    <text evidence="1">The glycine cleavage system catalyzes the degradation of glycine. The H protein shuttles the methylamine group of glycine from the P protein to the T protein.</text>
</comment>
<comment type="cofactor">
    <cofactor evidence="1">
        <name>(R)-lipoate</name>
        <dbReference type="ChEBI" id="CHEBI:83088"/>
    </cofactor>
    <text evidence="1">Binds 1 lipoyl cofactor covalently.</text>
</comment>
<comment type="subunit">
    <text evidence="1">The glycine cleavage system is composed of four proteins: P, T, L and H.</text>
</comment>
<comment type="similarity">
    <text evidence="1">Belongs to the GcvH family.</text>
</comment>
<sequence>MNFPQNVKYTNEHEWIRLEGDVAYVGITDYAQEQLGDIVFVDIPTEGETLEAGEVFGTIEVVKTISDLFLPVAGEVVEQNPALEENPELVNKDPYGEGWLIKMKPANAADLDNLLDAEGYKAVVNA</sequence>
<proteinExistence type="inferred from homology"/>
<reference key="1">
    <citation type="journal article" date="2005" name="Science">
        <title>Extensive DNA inversions in the B. fragilis genome control variable gene expression.</title>
        <authorList>
            <person name="Cerdeno-Tarraga A.-M."/>
            <person name="Patrick S."/>
            <person name="Crossman L.C."/>
            <person name="Blakely G."/>
            <person name="Abratt V."/>
            <person name="Lennard N."/>
            <person name="Poxton I."/>
            <person name="Duerden B."/>
            <person name="Harris B."/>
            <person name="Quail M.A."/>
            <person name="Barron A."/>
            <person name="Clark L."/>
            <person name="Corton C."/>
            <person name="Doggett J."/>
            <person name="Holden M.T.G."/>
            <person name="Larke N."/>
            <person name="Line A."/>
            <person name="Lord A."/>
            <person name="Norbertczak H."/>
            <person name="Ormond D."/>
            <person name="Price C."/>
            <person name="Rabbinowitsch E."/>
            <person name="Woodward J."/>
            <person name="Barrell B.G."/>
            <person name="Parkhill J."/>
        </authorList>
    </citation>
    <scope>NUCLEOTIDE SEQUENCE [LARGE SCALE GENOMIC DNA]</scope>
    <source>
        <strain>ATCC 25285 / DSM 2151 / CCUG 4856 / JCM 11019 / LMG 10263 / NCTC 9343 / Onslow / VPI 2553 / EN-2</strain>
    </source>
</reference>